<sequence length="530" mass="58214">MKLNDVTRGTGLEEHGIINANLIYWTPPTAVLYEQIVERGEGLVSHLGALAVKTGHYTGRAANEKFIVDEPTSRDHINWGKVNRPFDPEKFDSLYKRMTAYMHGKDLFIQDCFAGASPKHRLPIRVIAEKAWHSLFARNMFVKATAAELENHKPRFTVIDMPNFHAVPQIDGTNSETFIIINFAKRLVIIGGTSYAGEIKKSIFTVLNYLLPHHSKVMSMHCSANTGEKGDVAVFFGLSGTGKTTLSAAPNRSLIGDDEHGWDDDGVFNFEGGCYAKIINLSKESEPEIYETTRKFGTILENVAIDTISRRIDLNDDSFTENTRASYPITHIPNIVPSGMGGHPTNVIMLTCDAFGVLPPIARLTPEQAMYHFLSGYTAKVAGTEAGITEPQATFSTCFGAPFMALHPSVYAELLKAKIARHKVNCWLVNTGWSGGAYGVGSRMKIGYSRALVNAALDGTLAAGQFEKDSVFGLDIPRACPGVPGEVLNPRNVWADKAAYDATAKDLVEMFRKNFEQFKANVSQEVACVL</sequence>
<gene>
    <name evidence="1" type="primary">pckA</name>
    <name type="ordered locus">Gura_0871</name>
</gene>
<reference key="1">
    <citation type="submission" date="2007-05" db="EMBL/GenBank/DDBJ databases">
        <title>Complete sequence of Geobacter uraniireducens Rf4.</title>
        <authorList>
            <consortium name="US DOE Joint Genome Institute"/>
            <person name="Copeland A."/>
            <person name="Lucas S."/>
            <person name="Lapidus A."/>
            <person name="Barry K."/>
            <person name="Detter J.C."/>
            <person name="Glavina del Rio T."/>
            <person name="Hammon N."/>
            <person name="Israni S."/>
            <person name="Dalin E."/>
            <person name="Tice H."/>
            <person name="Pitluck S."/>
            <person name="Chertkov O."/>
            <person name="Brettin T."/>
            <person name="Bruce D."/>
            <person name="Han C."/>
            <person name="Schmutz J."/>
            <person name="Larimer F."/>
            <person name="Land M."/>
            <person name="Hauser L."/>
            <person name="Kyrpides N."/>
            <person name="Mikhailova N."/>
            <person name="Shelobolina E."/>
            <person name="Aklujkar M."/>
            <person name="Lovley D."/>
            <person name="Richardson P."/>
        </authorList>
    </citation>
    <scope>NUCLEOTIDE SEQUENCE [LARGE SCALE GENOMIC DNA]</scope>
    <source>
        <strain>ATCC BAA-1134 / JCM 13001 / Rf4</strain>
    </source>
</reference>
<feature type="chain" id="PRO_1000080996" description="Phosphoenolpyruvate carboxykinase (ATP)">
    <location>
        <begin position="1"/>
        <end position="530"/>
    </location>
</feature>
<feature type="binding site" evidence="1">
    <location>
        <position position="60"/>
    </location>
    <ligand>
        <name>substrate</name>
    </ligand>
</feature>
<feature type="binding site" evidence="1">
    <location>
        <position position="195"/>
    </location>
    <ligand>
        <name>substrate</name>
    </ligand>
</feature>
<feature type="binding site" evidence="1">
    <location>
        <position position="201"/>
    </location>
    <ligand>
        <name>ATP</name>
        <dbReference type="ChEBI" id="CHEBI:30616"/>
    </ligand>
</feature>
<feature type="binding site" evidence="1">
    <location>
        <position position="201"/>
    </location>
    <ligand>
        <name>Mn(2+)</name>
        <dbReference type="ChEBI" id="CHEBI:29035"/>
    </ligand>
</feature>
<feature type="binding site" evidence="1">
    <location>
        <position position="201"/>
    </location>
    <ligand>
        <name>substrate</name>
    </ligand>
</feature>
<feature type="binding site" evidence="1">
    <location>
        <position position="221"/>
    </location>
    <ligand>
        <name>ATP</name>
        <dbReference type="ChEBI" id="CHEBI:30616"/>
    </ligand>
</feature>
<feature type="binding site" evidence="1">
    <location>
        <position position="221"/>
    </location>
    <ligand>
        <name>Mn(2+)</name>
        <dbReference type="ChEBI" id="CHEBI:29035"/>
    </ligand>
</feature>
<feature type="binding site" evidence="1">
    <location>
        <begin position="237"/>
        <end position="245"/>
    </location>
    <ligand>
        <name>ATP</name>
        <dbReference type="ChEBI" id="CHEBI:30616"/>
    </ligand>
</feature>
<feature type="binding site" evidence="1">
    <location>
        <position position="258"/>
    </location>
    <ligand>
        <name>Mn(2+)</name>
        <dbReference type="ChEBI" id="CHEBI:29035"/>
    </ligand>
</feature>
<feature type="binding site" evidence="1">
    <location>
        <position position="286"/>
    </location>
    <ligand>
        <name>ATP</name>
        <dbReference type="ChEBI" id="CHEBI:30616"/>
    </ligand>
</feature>
<feature type="binding site" evidence="1">
    <location>
        <position position="324"/>
    </location>
    <ligand>
        <name>ATP</name>
        <dbReference type="ChEBI" id="CHEBI:30616"/>
    </ligand>
</feature>
<feature type="binding site" evidence="1">
    <location>
        <position position="324"/>
    </location>
    <ligand>
        <name>substrate</name>
    </ligand>
</feature>
<feature type="binding site" evidence="1">
    <location>
        <position position="449"/>
    </location>
    <ligand>
        <name>ATP</name>
        <dbReference type="ChEBI" id="CHEBI:30616"/>
    </ligand>
</feature>
<dbReference type="EC" id="4.1.1.49" evidence="1"/>
<dbReference type="EMBL" id="CP000698">
    <property type="protein sequence ID" value="ABQ25077.1"/>
    <property type="molecule type" value="Genomic_DNA"/>
</dbReference>
<dbReference type="RefSeq" id="WP_011937801.1">
    <property type="nucleotide sequence ID" value="NC_009483.1"/>
</dbReference>
<dbReference type="SMR" id="A5GBF9"/>
<dbReference type="STRING" id="351605.Gura_0871"/>
<dbReference type="KEGG" id="gur:Gura_0871"/>
<dbReference type="HOGENOM" id="CLU_018247_0_1_7"/>
<dbReference type="OrthoDB" id="9806325at2"/>
<dbReference type="UniPathway" id="UPA00138"/>
<dbReference type="Proteomes" id="UP000006695">
    <property type="component" value="Chromosome"/>
</dbReference>
<dbReference type="GO" id="GO:0005829">
    <property type="term" value="C:cytosol"/>
    <property type="evidence" value="ECO:0007669"/>
    <property type="project" value="TreeGrafter"/>
</dbReference>
<dbReference type="GO" id="GO:0005524">
    <property type="term" value="F:ATP binding"/>
    <property type="evidence" value="ECO:0007669"/>
    <property type="project" value="UniProtKB-UniRule"/>
</dbReference>
<dbReference type="GO" id="GO:0046872">
    <property type="term" value="F:metal ion binding"/>
    <property type="evidence" value="ECO:0007669"/>
    <property type="project" value="UniProtKB-KW"/>
</dbReference>
<dbReference type="GO" id="GO:0004612">
    <property type="term" value="F:phosphoenolpyruvate carboxykinase (ATP) activity"/>
    <property type="evidence" value="ECO:0007669"/>
    <property type="project" value="UniProtKB-UniRule"/>
</dbReference>
<dbReference type="GO" id="GO:0006094">
    <property type="term" value="P:gluconeogenesis"/>
    <property type="evidence" value="ECO:0007669"/>
    <property type="project" value="UniProtKB-UniRule"/>
</dbReference>
<dbReference type="CDD" id="cd00484">
    <property type="entry name" value="PEPCK_ATP"/>
    <property type="match status" value="1"/>
</dbReference>
<dbReference type="Gene3D" id="3.90.228.20">
    <property type="match status" value="1"/>
</dbReference>
<dbReference type="Gene3D" id="3.40.449.10">
    <property type="entry name" value="Phosphoenolpyruvate Carboxykinase, domain 1"/>
    <property type="match status" value="1"/>
</dbReference>
<dbReference type="Gene3D" id="2.170.8.10">
    <property type="entry name" value="Phosphoenolpyruvate Carboxykinase, domain 2"/>
    <property type="match status" value="1"/>
</dbReference>
<dbReference type="HAMAP" id="MF_00453">
    <property type="entry name" value="PEPCK_ATP"/>
    <property type="match status" value="1"/>
</dbReference>
<dbReference type="InterPro" id="IPR001272">
    <property type="entry name" value="PEP_carboxykinase_ATP"/>
</dbReference>
<dbReference type="InterPro" id="IPR013035">
    <property type="entry name" value="PEP_carboxykinase_C"/>
</dbReference>
<dbReference type="InterPro" id="IPR008210">
    <property type="entry name" value="PEP_carboxykinase_N"/>
</dbReference>
<dbReference type="InterPro" id="IPR015994">
    <property type="entry name" value="PEPCK_ATP_CS"/>
</dbReference>
<dbReference type="NCBIfam" id="TIGR00224">
    <property type="entry name" value="pckA"/>
    <property type="match status" value="1"/>
</dbReference>
<dbReference type="NCBIfam" id="NF006820">
    <property type="entry name" value="PRK09344.1-2"/>
    <property type="match status" value="1"/>
</dbReference>
<dbReference type="NCBIfam" id="NF006821">
    <property type="entry name" value="PRK09344.1-3"/>
    <property type="match status" value="1"/>
</dbReference>
<dbReference type="NCBIfam" id="NF006822">
    <property type="entry name" value="PRK09344.1-4"/>
    <property type="match status" value="1"/>
</dbReference>
<dbReference type="PANTHER" id="PTHR30031:SF0">
    <property type="entry name" value="PHOSPHOENOLPYRUVATE CARBOXYKINASE (ATP)"/>
    <property type="match status" value="1"/>
</dbReference>
<dbReference type="PANTHER" id="PTHR30031">
    <property type="entry name" value="PHOSPHOENOLPYRUVATE CARBOXYKINASE ATP"/>
    <property type="match status" value="1"/>
</dbReference>
<dbReference type="Pfam" id="PF01293">
    <property type="entry name" value="PEPCK_ATP"/>
    <property type="match status" value="1"/>
</dbReference>
<dbReference type="PIRSF" id="PIRSF006294">
    <property type="entry name" value="PEP_crbxkin"/>
    <property type="match status" value="1"/>
</dbReference>
<dbReference type="SUPFAM" id="SSF68923">
    <property type="entry name" value="PEP carboxykinase N-terminal domain"/>
    <property type="match status" value="1"/>
</dbReference>
<dbReference type="SUPFAM" id="SSF53795">
    <property type="entry name" value="PEP carboxykinase-like"/>
    <property type="match status" value="1"/>
</dbReference>
<dbReference type="PROSITE" id="PS00532">
    <property type="entry name" value="PEPCK_ATP"/>
    <property type="match status" value="1"/>
</dbReference>
<protein>
    <recommendedName>
        <fullName evidence="1">Phosphoenolpyruvate carboxykinase (ATP)</fullName>
        <shortName evidence="1">PCK</shortName>
        <shortName evidence="1">PEP carboxykinase</shortName>
        <shortName evidence="1">PEPCK</shortName>
        <ecNumber evidence="1">4.1.1.49</ecNumber>
    </recommendedName>
</protein>
<name>PCKA_GEOUR</name>
<evidence type="ECO:0000255" key="1">
    <source>
        <dbReference type="HAMAP-Rule" id="MF_00453"/>
    </source>
</evidence>
<proteinExistence type="inferred from homology"/>
<keyword id="KW-0067">ATP-binding</keyword>
<keyword id="KW-0963">Cytoplasm</keyword>
<keyword id="KW-0210">Decarboxylase</keyword>
<keyword id="KW-0312">Gluconeogenesis</keyword>
<keyword id="KW-0456">Lyase</keyword>
<keyword id="KW-0464">Manganese</keyword>
<keyword id="KW-0479">Metal-binding</keyword>
<keyword id="KW-0547">Nucleotide-binding</keyword>
<keyword id="KW-1185">Reference proteome</keyword>
<organism>
    <name type="scientific">Geotalea uraniireducens (strain Rf4)</name>
    <name type="common">Geobacter uraniireducens</name>
    <dbReference type="NCBI Taxonomy" id="351605"/>
    <lineage>
        <taxon>Bacteria</taxon>
        <taxon>Pseudomonadati</taxon>
        <taxon>Thermodesulfobacteriota</taxon>
        <taxon>Desulfuromonadia</taxon>
        <taxon>Geobacterales</taxon>
        <taxon>Geobacteraceae</taxon>
        <taxon>Geotalea</taxon>
    </lineage>
</organism>
<accession>A5GBF9</accession>
<comment type="function">
    <text evidence="1">Involved in the gluconeogenesis. Catalyzes the conversion of oxaloacetate (OAA) to phosphoenolpyruvate (PEP) through direct phosphoryl transfer between the nucleoside triphosphate and OAA.</text>
</comment>
<comment type="catalytic activity">
    <reaction evidence="1">
        <text>oxaloacetate + ATP = phosphoenolpyruvate + ADP + CO2</text>
        <dbReference type="Rhea" id="RHEA:18617"/>
        <dbReference type="ChEBI" id="CHEBI:16452"/>
        <dbReference type="ChEBI" id="CHEBI:16526"/>
        <dbReference type="ChEBI" id="CHEBI:30616"/>
        <dbReference type="ChEBI" id="CHEBI:58702"/>
        <dbReference type="ChEBI" id="CHEBI:456216"/>
        <dbReference type="EC" id="4.1.1.49"/>
    </reaction>
</comment>
<comment type="cofactor">
    <cofactor evidence="1">
        <name>Mn(2+)</name>
        <dbReference type="ChEBI" id="CHEBI:29035"/>
    </cofactor>
    <text evidence="1">Binds 1 Mn(2+) ion per subunit.</text>
</comment>
<comment type="pathway">
    <text evidence="1">Carbohydrate biosynthesis; gluconeogenesis.</text>
</comment>
<comment type="subcellular location">
    <subcellularLocation>
        <location evidence="1">Cytoplasm</location>
    </subcellularLocation>
</comment>
<comment type="similarity">
    <text evidence="1">Belongs to the phosphoenolpyruvate carboxykinase (ATP) family.</text>
</comment>